<gene>
    <name evidence="1" type="primary">NP</name>
</gene>
<dbReference type="EMBL" id="M63756">
    <property type="protein sequence ID" value="AAA52255.1"/>
    <property type="molecule type" value="Genomic_RNA"/>
</dbReference>
<dbReference type="SMR" id="P26076"/>
<dbReference type="GO" id="GO:0019029">
    <property type="term" value="C:helical viral capsid"/>
    <property type="evidence" value="ECO:0007669"/>
    <property type="project" value="UniProtKB-UniRule"/>
</dbReference>
<dbReference type="GO" id="GO:0043657">
    <property type="term" value="C:host cell"/>
    <property type="evidence" value="ECO:0007669"/>
    <property type="project" value="GOC"/>
</dbReference>
<dbReference type="GO" id="GO:0042025">
    <property type="term" value="C:host cell nucleus"/>
    <property type="evidence" value="ECO:0007669"/>
    <property type="project" value="UniProtKB-SubCell"/>
</dbReference>
<dbReference type="GO" id="GO:1990904">
    <property type="term" value="C:ribonucleoprotein complex"/>
    <property type="evidence" value="ECO:0007669"/>
    <property type="project" value="UniProtKB-KW"/>
</dbReference>
<dbReference type="GO" id="GO:0019013">
    <property type="term" value="C:viral nucleocapsid"/>
    <property type="evidence" value="ECO:0007669"/>
    <property type="project" value="UniProtKB-UniRule"/>
</dbReference>
<dbReference type="GO" id="GO:0003723">
    <property type="term" value="F:RNA binding"/>
    <property type="evidence" value="ECO:0007669"/>
    <property type="project" value="UniProtKB-UniRule"/>
</dbReference>
<dbReference type="GO" id="GO:0005198">
    <property type="term" value="F:structural molecule activity"/>
    <property type="evidence" value="ECO:0007669"/>
    <property type="project" value="UniProtKB-UniRule"/>
</dbReference>
<dbReference type="GO" id="GO:0046718">
    <property type="term" value="P:symbiont entry into host cell"/>
    <property type="evidence" value="ECO:0007669"/>
    <property type="project" value="UniProtKB-KW"/>
</dbReference>
<dbReference type="GO" id="GO:0075732">
    <property type="term" value="P:viral penetration into host nucleus"/>
    <property type="evidence" value="ECO:0007669"/>
    <property type="project" value="UniProtKB-UniRule"/>
</dbReference>
<dbReference type="HAMAP" id="MF_04070">
    <property type="entry name" value="INFV_NCAP"/>
    <property type="match status" value="1"/>
</dbReference>
<dbReference type="InterPro" id="IPR002141">
    <property type="entry name" value="Flu_NP"/>
</dbReference>
<dbReference type="Pfam" id="PF00506">
    <property type="entry name" value="Flu_NP"/>
    <property type="match status" value="1"/>
</dbReference>
<dbReference type="SUPFAM" id="SSF161003">
    <property type="entry name" value="flu NP-like"/>
    <property type="match status" value="1"/>
</dbReference>
<sequence length="498" mass="56215">MASQGTKRSYEQMETGGERQNATEIRASVGRMIGGIGRFYIQMCTELKLSDYEGRLIQNSITIERMVLSAFDERRNKYLEEHPSAGKDPKKTGGPIYRKIDGKWMRELILYDKEEIRRIWRQANNGEDATAGLTHIMIWHSNLNDATYQRTRALVRTGMDPRMCSLMQGSTLPRRSGAAGAAVKGVGTMVMELIRMIKRGINDRNFWRGENGRRTRIAYERMCNILKGKFQTAAQRAMMDQVRESRNPGNAEIEDLIFLARSALILRGSVAHKSCLPTCVYGLAVASGHDFEREGYSLVGIDPFRLLQNSQIFSLIRPNENPAHKSQLVWMACHSAAFEDLRVSSFIRGKRVVPRGQLSTRGVQIASNENMETMDSSTLELRSRYWAIRTRSGGNTNQQRASAGQISVQPTFSVQRNLPFERATVMAAFIGNTEGRTSDMRTEIIRMMESAKPEDVSFQGRGVFELSDEKATSPIVPSFDMSNEGSYFFGDNAEEYDN</sequence>
<keyword id="KW-0167">Capsid protein</keyword>
<keyword id="KW-1139">Helical capsid protein</keyword>
<keyword id="KW-1048">Host nucleus</keyword>
<keyword id="KW-0945">Host-virus interaction</keyword>
<keyword id="KW-0687">Ribonucleoprotein</keyword>
<keyword id="KW-0694">RNA-binding</keyword>
<keyword id="KW-0543">Viral nucleoprotein</keyword>
<keyword id="KW-1163">Viral penetration into host nucleus</keyword>
<keyword id="KW-0946">Virion</keyword>
<keyword id="KW-1160">Virus entry into host cell</keyword>
<feature type="chain" id="PRO_0000079134" description="Nucleoprotein">
    <location>
        <begin position="1"/>
        <end position="498"/>
    </location>
</feature>
<feature type="region of interest" description="Disordered" evidence="2">
    <location>
        <begin position="1"/>
        <end position="21"/>
    </location>
</feature>
<feature type="short sequence motif" description="Unconventional nuclear localization signal" evidence="1">
    <location>
        <begin position="1"/>
        <end position="18"/>
    </location>
</feature>
<feature type="short sequence motif" description="Bipartite nuclear localization signal" evidence="1">
    <location>
        <begin position="198"/>
        <end position="216"/>
    </location>
</feature>
<protein>
    <recommendedName>
        <fullName evidence="1">Nucleoprotein</fullName>
    </recommendedName>
    <alternativeName>
        <fullName evidence="1">Nucleocapsid protein</fullName>
        <shortName evidence="1">Protein N</shortName>
    </alternativeName>
</protein>
<accession>P26076</accession>
<name>NCAP_I35A2</name>
<organismHost>
    <name type="scientific">Aves</name>
    <dbReference type="NCBI Taxonomy" id="8782"/>
</organismHost>
<organismHost>
    <name type="scientific">Homo sapiens</name>
    <name type="common">Human</name>
    <dbReference type="NCBI Taxonomy" id="9606"/>
</organismHost>
<organismHost>
    <name type="scientific">Sus scrofa</name>
    <name type="common">Pig</name>
    <dbReference type="NCBI Taxonomy" id="9823"/>
</organismHost>
<comment type="function">
    <text evidence="1">Encapsidates the negative strand viral RNA, protecting it from nucleases. The encapsidated genomic RNA is termed the ribonucleoprotein (RNP) and serves as template for transcription and replication. The RNP needs to be localized in the host nucleus to start an infectious cycle, but is too large to diffuse through the nuclear pore complex. NP comprises at least 2 nuclear localization signals that are responsible for the active RNP import into the nucleus through cellular importin alpha/beta pathway. Later in the infection, nclear export of RNPs are mediated through viral proteins NEP interacting with M1 which binds nucleoproteins. It is possible that nucleoprotein binds directly host exportin-1/XPO1 and plays an active role in RNPs nuclear export. M1 interaction with RNP seems to hide nucleoprotein's nuclear localization signals. Soon after a virion infects a new cell, M1 dissociates from the RNP under acidification of the virion driven by M2 protein. Dissociation of M1 from RNP unmasks nucleoprotein's nuclear localization signals, targeting the RNP to the nucleus.</text>
</comment>
<comment type="subunit">
    <text evidence="1">Homomultimerizes to form the nucleocapsid. May bind host exportin-1/XPO1. Binds to viral genomic RNA. Protein-RNA contacts are mediated by a combination of electrostatic interactions between positively charged residues and the phosphate backbone and planar interactions between aromatic side chains and bases.</text>
</comment>
<comment type="subcellular location">
    <subcellularLocation>
        <location evidence="1">Virion</location>
    </subcellularLocation>
    <subcellularLocation>
        <location evidence="1">Host nucleus</location>
    </subcellularLocation>
</comment>
<comment type="PTM">
    <text evidence="1">Late in virus-infected cells, may be cleaved from a 56-kDa protein to a 53-kDa protein by a cellular caspase. This cleavage might be a marker for the onset of apoptosis in infected cells or have a specific function in virus host interaction.</text>
</comment>
<comment type="similarity">
    <text evidence="1">Belongs to the influenza viruses nucleoprotein family.</text>
</comment>
<evidence type="ECO:0000255" key="1">
    <source>
        <dbReference type="HAMAP-Rule" id="MF_04070"/>
    </source>
</evidence>
<evidence type="ECO:0000256" key="2">
    <source>
        <dbReference type="SAM" id="MobiDB-lite"/>
    </source>
</evidence>
<reference key="1">
    <citation type="journal article" date="1991" name="J. Virol.">
        <title>Evolution of influenza A virus nucleoprotein genes: implications for the origins of H1N1 human and classical swine viruses.</title>
        <authorList>
            <person name="Gorman O.T."/>
            <person name="Bean W.J."/>
            <person name="Kawaoka Y."/>
            <person name="Donatelli I."/>
            <person name="Guo Y."/>
            <person name="Webster R.G."/>
        </authorList>
    </citation>
    <scope>NUCLEOTIDE SEQUENCE [GENOMIC RNA]</scope>
</reference>
<proteinExistence type="inferred from homology"/>
<organism>
    <name type="scientific">Influenza A virus (strain A/Swine/Ohio/23/1935 H1N1)</name>
    <dbReference type="NCBI Taxonomy" id="383539"/>
    <lineage>
        <taxon>Viruses</taxon>
        <taxon>Riboviria</taxon>
        <taxon>Orthornavirae</taxon>
        <taxon>Negarnaviricota</taxon>
        <taxon>Polyploviricotina</taxon>
        <taxon>Insthoviricetes</taxon>
        <taxon>Articulavirales</taxon>
        <taxon>Orthomyxoviridae</taxon>
        <taxon>Alphainfluenzavirus</taxon>
        <taxon>Alphainfluenzavirus influenzae</taxon>
        <taxon>Influenza A virus</taxon>
    </lineage>
</organism>